<dbReference type="EMBL" id="J02288">
    <property type="protein sequence ID" value="AAB59899.1"/>
    <property type="molecule type" value="Genomic_DNA"/>
</dbReference>
<dbReference type="PIR" id="C03635">
    <property type="entry name" value="TVVPA"/>
</dbReference>
<dbReference type="SMR" id="P68835"/>
<dbReference type="Proteomes" id="UP000008479">
    <property type="component" value="Genome"/>
</dbReference>
<dbReference type="GO" id="GO:0030430">
    <property type="term" value="C:host cell cytoplasm"/>
    <property type="evidence" value="ECO:0007669"/>
    <property type="project" value="UniProtKB-SubCell"/>
</dbReference>
<dbReference type="GO" id="GO:0042025">
    <property type="term" value="C:host cell nucleus"/>
    <property type="evidence" value="ECO:0007669"/>
    <property type="project" value="UniProtKB-SubCell"/>
</dbReference>
<dbReference type="GO" id="GO:0008270">
    <property type="term" value="F:zinc ion binding"/>
    <property type="evidence" value="ECO:0007669"/>
    <property type="project" value="UniProtKB-KW"/>
</dbReference>
<dbReference type="Gene3D" id="1.10.287.110">
    <property type="entry name" value="DnaJ domain"/>
    <property type="match status" value="1"/>
</dbReference>
<dbReference type="Gene3D" id="1.20.120.1860">
    <property type="entry name" value="Small t-antigen, unique domain"/>
    <property type="match status" value="1"/>
</dbReference>
<dbReference type="InterPro" id="IPR001623">
    <property type="entry name" value="DnaJ_domain"/>
</dbReference>
<dbReference type="InterPro" id="IPR036869">
    <property type="entry name" value="J_dom_sf"/>
</dbReference>
<dbReference type="InterPro" id="IPR003354">
    <property type="entry name" value="Papo_T_antigen"/>
</dbReference>
<dbReference type="InterPro" id="IPR036092">
    <property type="entry name" value="Papo_T_antigensf"/>
</dbReference>
<dbReference type="Pfam" id="PF02380">
    <property type="entry name" value="Papo_T_antigen"/>
    <property type="match status" value="1"/>
</dbReference>
<dbReference type="SMART" id="SM00271">
    <property type="entry name" value="DnaJ"/>
    <property type="match status" value="1"/>
</dbReference>
<dbReference type="SUPFAM" id="SSF46565">
    <property type="entry name" value="Chaperone J-domain"/>
    <property type="match status" value="1"/>
</dbReference>
<dbReference type="SUPFAM" id="SSF161240">
    <property type="entry name" value="T-antigen specific domain-like"/>
    <property type="match status" value="1"/>
</dbReference>
<name>ST_POVMA</name>
<evidence type="ECO:0000250" key="1">
    <source>
        <dbReference type="UniProtKB" id="P03081"/>
    </source>
</evidence>
<sequence length="195" mass="22811">MDRVLSRADKERLLELLKLPRQLWGDFGRMQQAYKQQSLLLHPDKGGSHALMQELNSLWGTFKTEVYNLRMNLGGTGFQVRRLHADGWNLSTKDTFGDRYYQRFCRMPLTCLVNVKYSSCSCILCLLRKQHRELKDKCDARCLVLGECFCLECYMQWFGTPTRDVLNLYADFIASMPIDWLDLDVHSVYNPRLSP</sequence>
<accession>P68835</accession>
<accession>P03078</accession>
<feature type="chain" id="PRO_0000115059" description="Small t antigen">
    <location>
        <begin position="1"/>
        <end position="195"/>
    </location>
</feature>
<feature type="domain" description="J">
    <location>
        <begin position="12"/>
        <end position="75"/>
    </location>
</feature>
<feature type="zinc finger region" description="C4-type; atypical">
    <location>
        <begin position="111"/>
        <end position="125"/>
    </location>
</feature>
<feature type="zinc finger region" description="H1C3-type; atypical">
    <location>
        <begin position="131"/>
        <end position="153"/>
    </location>
</feature>
<feature type="modified residue" description="N-acetylmethionine; by host" evidence="1">
    <location>
        <position position="1"/>
    </location>
</feature>
<comment type="function">
    <text evidence="1">Promotes efficient viral genome replication by accelerating both G1 and S phase progression of the cell cycle. Inhibits host PP2A by binding to the A subunit, thereby displacing lower affinity regulatory B subunit. Inactivation of PP2A in turn results in the transactivation of cyclin A and cyclin D1 promoters. Late during the infection cycle, ST may induce dephosphorylation of host MTOR, leading to the inhibition of cap-dependent translation. May establish and maintain high levels of viral genomes during persistent infection in cell culture.</text>
</comment>
<comment type="subunit">
    <text evidence="1">Interacts with host PPP2R1A; the interaction inhibits PP2A activity.</text>
</comment>
<comment type="subcellular location">
    <subcellularLocation>
        <location>Host cytoplasm</location>
    </subcellularLocation>
    <subcellularLocation>
        <location evidence="1">Host nucleus</location>
    </subcellularLocation>
</comment>
<comment type="alternative products">
    <event type="alternative splicing"/>
    <isoform>
        <id>P68835-1</id>
        <name>Small t antigen</name>
        <sequence type="displayed"/>
    </isoform>
    <isoform>
        <id>P03077-1</id>
        <name>Middle T antigen</name>
        <sequence type="external"/>
    </isoform>
    <isoform>
        <id>P03073-1</id>
        <name>Large T antigen</name>
        <sequence type="external"/>
    </isoform>
</comment>
<comment type="domain">
    <text evidence="1">The common region of ST and LT proteins comprises the J domain. This domain is essential for multiple viral activities, including virion assembly, viral DNA replication, transformation and transcriptional activation. This domain is also required for cyclin A-transactivating activity of ST.</text>
</comment>
<keyword id="KW-0007">Acetylation</keyword>
<keyword id="KW-0010">Activator</keyword>
<keyword id="KW-0025">Alternative splicing</keyword>
<keyword id="KW-0244">Early protein</keyword>
<keyword id="KW-1035">Host cytoplasm</keyword>
<keyword id="KW-1048">Host nucleus</keyword>
<keyword id="KW-0945">Host-virus interaction</keyword>
<keyword id="KW-0479">Metal-binding</keyword>
<keyword id="KW-0553">Oncogene</keyword>
<keyword id="KW-0597">Phosphoprotein</keyword>
<keyword id="KW-1185">Reference proteome</keyword>
<keyword id="KW-0804">Transcription</keyword>
<keyword id="KW-0805">Transcription regulation</keyword>
<keyword id="KW-0862">Zinc</keyword>
<keyword id="KW-0863">Zinc-finger</keyword>
<organism>
    <name type="scientific">Murine polyomavirus (strain A2)</name>
    <name type="common">MPyV</name>
    <dbReference type="NCBI Taxonomy" id="10636"/>
    <lineage>
        <taxon>Viruses</taxon>
        <taxon>Monodnaviria</taxon>
        <taxon>Shotokuvirae</taxon>
        <taxon>Cossaviricota</taxon>
        <taxon>Papovaviricetes</taxon>
        <taxon>Sepolyvirales</taxon>
        <taxon>Polyomaviridae</taxon>
        <taxon>Alphapolyomavirus</taxon>
        <taxon>Mus musculus polyomavirus 1</taxon>
    </lineage>
</organism>
<reference key="1">
    <citation type="journal article" date="1980" name="Nature">
        <title>Coding potential and regulatory signals of the polyoma virus genome.</title>
        <authorList>
            <person name="Soeda E."/>
            <person name="Arrand J.R."/>
            <person name="Smolar N."/>
            <person name="Walsh J.E."/>
            <person name="Griffin B.E."/>
        </authorList>
    </citation>
    <scope>NUCLEOTIDE SEQUENCE [GENOMIC DNA]</scope>
</reference>
<protein>
    <recommendedName>
        <fullName>Small t antigen</fullName>
        <shortName>ST</shortName>
        <shortName>ST-AG</shortName>
    </recommendedName>
</protein>
<proteinExistence type="inferred from homology"/>
<organismHost>
    <name type="scientific">Mus musculus</name>
    <name type="common">Mouse</name>
    <dbReference type="NCBI Taxonomy" id="10090"/>
</organismHost>